<dbReference type="EC" id="3.5.2.7" evidence="1"/>
<dbReference type="EMBL" id="BA000017">
    <property type="protein sequence ID" value="BAB58492.1"/>
    <property type="molecule type" value="Genomic_DNA"/>
</dbReference>
<dbReference type="RefSeq" id="WP_000998753.1">
    <property type="nucleotide sequence ID" value="NC_002758.2"/>
</dbReference>
<dbReference type="SMR" id="P64417"/>
<dbReference type="KEGG" id="sav:SAV2330"/>
<dbReference type="HOGENOM" id="CLU_041647_0_1_9"/>
<dbReference type="PhylomeDB" id="P64417"/>
<dbReference type="UniPathway" id="UPA00379">
    <property type="reaction ID" value="UER00551"/>
</dbReference>
<dbReference type="Proteomes" id="UP000002481">
    <property type="component" value="Chromosome"/>
</dbReference>
<dbReference type="GO" id="GO:0005737">
    <property type="term" value="C:cytoplasm"/>
    <property type="evidence" value="ECO:0007669"/>
    <property type="project" value="UniProtKB-SubCell"/>
</dbReference>
<dbReference type="GO" id="GO:0050480">
    <property type="term" value="F:imidazolonepropionase activity"/>
    <property type="evidence" value="ECO:0007669"/>
    <property type="project" value="UniProtKB-UniRule"/>
</dbReference>
<dbReference type="GO" id="GO:0005506">
    <property type="term" value="F:iron ion binding"/>
    <property type="evidence" value="ECO:0007669"/>
    <property type="project" value="UniProtKB-UniRule"/>
</dbReference>
<dbReference type="GO" id="GO:0008270">
    <property type="term" value="F:zinc ion binding"/>
    <property type="evidence" value="ECO:0007669"/>
    <property type="project" value="UniProtKB-UniRule"/>
</dbReference>
<dbReference type="GO" id="GO:0019556">
    <property type="term" value="P:L-histidine catabolic process to glutamate and formamide"/>
    <property type="evidence" value="ECO:0007669"/>
    <property type="project" value="UniProtKB-UniPathway"/>
</dbReference>
<dbReference type="GO" id="GO:0019557">
    <property type="term" value="P:L-histidine catabolic process to glutamate and formate"/>
    <property type="evidence" value="ECO:0007669"/>
    <property type="project" value="UniProtKB-UniPathway"/>
</dbReference>
<dbReference type="CDD" id="cd01296">
    <property type="entry name" value="Imidazolone-5PH"/>
    <property type="match status" value="1"/>
</dbReference>
<dbReference type="FunFam" id="3.20.20.140:FF:000007">
    <property type="entry name" value="Imidazolonepropionase"/>
    <property type="match status" value="1"/>
</dbReference>
<dbReference type="Gene3D" id="3.20.20.140">
    <property type="entry name" value="Metal-dependent hydrolases"/>
    <property type="match status" value="1"/>
</dbReference>
<dbReference type="Gene3D" id="2.30.40.10">
    <property type="entry name" value="Urease, subunit C, domain 1"/>
    <property type="match status" value="1"/>
</dbReference>
<dbReference type="HAMAP" id="MF_00372">
    <property type="entry name" value="HutI"/>
    <property type="match status" value="1"/>
</dbReference>
<dbReference type="InterPro" id="IPR006680">
    <property type="entry name" value="Amidohydro-rel"/>
</dbReference>
<dbReference type="InterPro" id="IPR005920">
    <property type="entry name" value="HutI"/>
</dbReference>
<dbReference type="InterPro" id="IPR011059">
    <property type="entry name" value="Metal-dep_hydrolase_composite"/>
</dbReference>
<dbReference type="InterPro" id="IPR032466">
    <property type="entry name" value="Metal_Hydrolase"/>
</dbReference>
<dbReference type="NCBIfam" id="TIGR01224">
    <property type="entry name" value="hutI"/>
    <property type="match status" value="1"/>
</dbReference>
<dbReference type="PANTHER" id="PTHR42752">
    <property type="entry name" value="IMIDAZOLONEPROPIONASE"/>
    <property type="match status" value="1"/>
</dbReference>
<dbReference type="PANTHER" id="PTHR42752:SF1">
    <property type="entry name" value="IMIDAZOLONEPROPIONASE-RELATED"/>
    <property type="match status" value="1"/>
</dbReference>
<dbReference type="Pfam" id="PF01979">
    <property type="entry name" value="Amidohydro_1"/>
    <property type="match status" value="1"/>
</dbReference>
<dbReference type="SUPFAM" id="SSF51338">
    <property type="entry name" value="Composite domain of metallo-dependent hydrolases"/>
    <property type="match status" value="1"/>
</dbReference>
<dbReference type="SUPFAM" id="SSF51556">
    <property type="entry name" value="Metallo-dependent hydrolases"/>
    <property type="match status" value="1"/>
</dbReference>
<evidence type="ECO:0000255" key="1">
    <source>
        <dbReference type="HAMAP-Rule" id="MF_00372"/>
    </source>
</evidence>
<accession>P64417</accession>
<accession>Q99RU3</accession>
<reference key="1">
    <citation type="journal article" date="2001" name="Lancet">
        <title>Whole genome sequencing of meticillin-resistant Staphylococcus aureus.</title>
        <authorList>
            <person name="Kuroda M."/>
            <person name="Ohta T."/>
            <person name="Uchiyama I."/>
            <person name="Baba T."/>
            <person name="Yuzawa H."/>
            <person name="Kobayashi I."/>
            <person name="Cui L."/>
            <person name="Oguchi A."/>
            <person name="Aoki K."/>
            <person name="Nagai Y."/>
            <person name="Lian J.-Q."/>
            <person name="Ito T."/>
            <person name="Kanamori M."/>
            <person name="Matsumaru H."/>
            <person name="Maruyama A."/>
            <person name="Murakami H."/>
            <person name="Hosoyama A."/>
            <person name="Mizutani-Ui Y."/>
            <person name="Takahashi N.K."/>
            <person name="Sawano T."/>
            <person name="Inoue R."/>
            <person name="Kaito C."/>
            <person name="Sekimizu K."/>
            <person name="Hirakawa H."/>
            <person name="Kuhara S."/>
            <person name="Goto S."/>
            <person name="Yabuzaki J."/>
            <person name="Kanehisa M."/>
            <person name="Yamashita A."/>
            <person name="Oshima K."/>
            <person name="Furuya K."/>
            <person name="Yoshino C."/>
            <person name="Shiba T."/>
            <person name="Hattori M."/>
            <person name="Ogasawara N."/>
            <person name="Hayashi H."/>
            <person name="Hiramatsu K."/>
        </authorList>
    </citation>
    <scope>NUCLEOTIDE SEQUENCE [LARGE SCALE GENOMIC DNA]</scope>
    <source>
        <strain>Mu50 / ATCC 700699</strain>
    </source>
</reference>
<feature type="chain" id="PRO_0000160959" description="Imidazolonepropionase">
    <location>
        <begin position="1"/>
        <end position="412"/>
    </location>
</feature>
<feature type="binding site" evidence="1">
    <location>
        <position position="76"/>
    </location>
    <ligand>
        <name>Fe(3+)</name>
        <dbReference type="ChEBI" id="CHEBI:29034"/>
    </ligand>
</feature>
<feature type="binding site" evidence="1">
    <location>
        <position position="76"/>
    </location>
    <ligand>
        <name>Zn(2+)</name>
        <dbReference type="ChEBI" id="CHEBI:29105"/>
    </ligand>
</feature>
<feature type="binding site" evidence="1">
    <location>
        <position position="78"/>
    </location>
    <ligand>
        <name>Fe(3+)</name>
        <dbReference type="ChEBI" id="CHEBI:29034"/>
    </ligand>
</feature>
<feature type="binding site" evidence="1">
    <location>
        <position position="78"/>
    </location>
    <ligand>
        <name>Zn(2+)</name>
        <dbReference type="ChEBI" id="CHEBI:29105"/>
    </ligand>
</feature>
<feature type="binding site" evidence="1">
    <location>
        <position position="85"/>
    </location>
    <ligand>
        <name>4-imidazolone-5-propanoate</name>
        <dbReference type="ChEBI" id="CHEBI:77893"/>
    </ligand>
</feature>
<feature type="binding site" evidence="1">
    <location>
        <position position="148"/>
    </location>
    <ligand>
        <name>4-imidazolone-5-propanoate</name>
        <dbReference type="ChEBI" id="CHEBI:77893"/>
    </ligand>
</feature>
<feature type="binding site" evidence="1">
    <location>
        <position position="148"/>
    </location>
    <ligand>
        <name>N-formimidoyl-L-glutamate</name>
        <dbReference type="ChEBI" id="CHEBI:58928"/>
    </ligand>
</feature>
<feature type="binding site" evidence="1">
    <location>
        <position position="181"/>
    </location>
    <ligand>
        <name>4-imidazolone-5-propanoate</name>
        <dbReference type="ChEBI" id="CHEBI:77893"/>
    </ligand>
</feature>
<feature type="binding site" evidence="1">
    <location>
        <position position="242"/>
    </location>
    <ligand>
        <name>Fe(3+)</name>
        <dbReference type="ChEBI" id="CHEBI:29034"/>
    </ligand>
</feature>
<feature type="binding site" evidence="1">
    <location>
        <position position="242"/>
    </location>
    <ligand>
        <name>Zn(2+)</name>
        <dbReference type="ChEBI" id="CHEBI:29105"/>
    </ligand>
</feature>
<feature type="binding site" evidence="1">
    <location>
        <position position="245"/>
    </location>
    <ligand>
        <name>4-imidazolone-5-propanoate</name>
        <dbReference type="ChEBI" id="CHEBI:77893"/>
    </ligand>
</feature>
<feature type="binding site" evidence="1">
    <location>
        <position position="317"/>
    </location>
    <ligand>
        <name>Fe(3+)</name>
        <dbReference type="ChEBI" id="CHEBI:29034"/>
    </ligand>
</feature>
<feature type="binding site" evidence="1">
    <location>
        <position position="317"/>
    </location>
    <ligand>
        <name>Zn(2+)</name>
        <dbReference type="ChEBI" id="CHEBI:29105"/>
    </ligand>
</feature>
<feature type="binding site" evidence="1">
    <location>
        <position position="319"/>
    </location>
    <ligand>
        <name>N-formimidoyl-L-glutamate</name>
        <dbReference type="ChEBI" id="CHEBI:58928"/>
    </ligand>
</feature>
<feature type="binding site" evidence="1">
    <location>
        <position position="321"/>
    </location>
    <ligand>
        <name>N-formimidoyl-L-glutamate</name>
        <dbReference type="ChEBI" id="CHEBI:58928"/>
    </ligand>
</feature>
<feature type="binding site" evidence="1">
    <location>
        <position position="322"/>
    </location>
    <ligand>
        <name>4-imidazolone-5-propanoate</name>
        <dbReference type="ChEBI" id="CHEBI:77893"/>
    </ligand>
</feature>
<proteinExistence type="inferred from homology"/>
<keyword id="KW-0963">Cytoplasm</keyword>
<keyword id="KW-0369">Histidine metabolism</keyword>
<keyword id="KW-0378">Hydrolase</keyword>
<keyword id="KW-0408">Iron</keyword>
<keyword id="KW-0479">Metal-binding</keyword>
<keyword id="KW-0862">Zinc</keyword>
<name>HUTI_STAAM</name>
<gene>
    <name evidence="1" type="primary">hutI</name>
    <name type="ordered locus">SAV2330</name>
</gene>
<comment type="function">
    <text evidence="1">Catalyzes the hydrolytic cleavage of the carbon-nitrogen bond in imidazolone-5-propanoate to yield N-formimidoyl-L-glutamate. It is the third step in the universal histidine degradation pathway.</text>
</comment>
<comment type="catalytic activity">
    <reaction evidence="1">
        <text>4-imidazolone-5-propanoate + H2O = N-formimidoyl-L-glutamate</text>
        <dbReference type="Rhea" id="RHEA:23660"/>
        <dbReference type="ChEBI" id="CHEBI:15377"/>
        <dbReference type="ChEBI" id="CHEBI:58928"/>
        <dbReference type="ChEBI" id="CHEBI:77893"/>
        <dbReference type="EC" id="3.5.2.7"/>
    </reaction>
</comment>
<comment type="cofactor">
    <cofactor evidence="1">
        <name>Zn(2+)</name>
        <dbReference type="ChEBI" id="CHEBI:29105"/>
    </cofactor>
    <cofactor evidence="1">
        <name>Fe(3+)</name>
        <dbReference type="ChEBI" id="CHEBI:29034"/>
    </cofactor>
    <text evidence="1">Binds 1 zinc or iron ion per subunit.</text>
</comment>
<comment type="pathway">
    <text evidence="1">Amino-acid degradation; L-histidine degradation into L-glutamate; N-formimidoyl-L-glutamate from L-histidine: step 3/3.</text>
</comment>
<comment type="subcellular location">
    <subcellularLocation>
        <location evidence="1">Cytoplasm</location>
    </subcellularLocation>
</comment>
<comment type="similarity">
    <text evidence="1">Belongs to the metallo-dependent hydrolases superfamily. HutI family.</text>
</comment>
<sequence length="412" mass="45025">MNDLIINHIAELILPKSTDKPLKGKELDELNVVKNGTVVIKDGKIVYAGQHTDDYDATETIDASGKVVSPALVDAHTHLTFGGSREHEMSLKRQGKSYLEILEMGGGILSTVNATRETSEDDLFKKAEHDLLTMIKHGVLAVESKSGYGLDRENELKQLKVSNRLAEKYDLDMKHTFLGPHAVPKEASSNEAFLEEMIALLPEVKQYADFADIFCETGVFTIEQSQHYMQKAKEAGFKVKIHADEIDPLGGLELAIDEQAISADHLVASSDKGKEKLRNSDTVAVLLPATTFYLGKEDYADARGMLDNNGAIALATDYNPGSSVTNNLQLVMAIAALKLKLSPSEVWNAVTVNAAKAIDINAGTINTGDKANLVIWDAPNHEYIPYHFGINHAEKVIKDGKVIVDNTLSFKA</sequence>
<protein>
    <recommendedName>
        <fullName evidence="1">Imidazolonepropionase</fullName>
        <ecNumber evidence="1">3.5.2.7</ecNumber>
    </recommendedName>
    <alternativeName>
        <fullName evidence="1">Imidazolone-5-propionate hydrolase</fullName>
    </alternativeName>
</protein>
<organism>
    <name type="scientific">Staphylococcus aureus (strain Mu50 / ATCC 700699)</name>
    <dbReference type="NCBI Taxonomy" id="158878"/>
    <lineage>
        <taxon>Bacteria</taxon>
        <taxon>Bacillati</taxon>
        <taxon>Bacillota</taxon>
        <taxon>Bacilli</taxon>
        <taxon>Bacillales</taxon>
        <taxon>Staphylococcaceae</taxon>
        <taxon>Staphylococcus</taxon>
    </lineage>
</organism>